<organism>
    <name type="scientific">Burkholderia orbicola (strain AU 1054)</name>
    <dbReference type="NCBI Taxonomy" id="331271"/>
    <lineage>
        <taxon>Bacteria</taxon>
        <taxon>Pseudomonadati</taxon>
        <taxon>Pseudomonadota</taxon>
        <taxon>Betaproteobacteria</taxon>
        <taxon>Burkholderiales</taxon>
        <taxon>Burkholderiaceae</taxon>
        <taxon>Burkholderia</taxon>
        <taxon>Burkholderia cepacia complex</taxon>
        <taxon>Burkholderia orbicola</taxon>
    </lineage>
</organism>
<keyword id="KW-0963">Cytoplasm</keyword>
<keyword id="KW-0350">Heme biosynthesis</keyword>
<keyword id="KW-0408">Iron</keyword>
<keyword id="KW-0456">Lyase</keyword>
<keyword id="KW-0479">Metal-binding</keyword>
<keyword id="KW-0627">Porphyrin biosynthesis</keyword>
<gene>
    <name evidence="1" type="primary">hemH</name>
    <name type="ordered locus">Bcen_0262</name>
</gene>
<dbReference type="EC" id="4.98.1.1" evidence="1"/>
<dbReference type="EMBL" id="CP000378">
    <property type="protein sequence ID" value="ABF75176.1"/>
    <property type="molecule type" value="Genomic_DNA"/>
</dbReference>
<dbReference type="SMR" id="Q1BYX9"/>
<dbReference type="HOGENOM" id="CLU_018884_0_0_4"/>
<dbReference type="UniPathway" id="UPA00252">
    <property type="reaction ID" value="UER00325"/>
</dbReference>
<dbReference type="GO" id="GO:0005737">
    <property type="term" value="C:cytoplasm"/>
    <property type="evidence" value="ECO:0007669"/>
    <property type="project" value="UniProtKB-SubCell"/>
</dbReference>
<dbReference type="GO" id="GO:0004325">
    <property type="term" value="F:ferrochelatase activity"/>
    <property type="evidence" value="ECO:0007669"/>
    <property type="project" value="UniProtKB-UniRule"/>
</dbReference>
<dbReference type="GO" id="GO:0046872">
    <property type="term" value="F:metal ion binding"/>
    <property type="evidence" value="ECO:0007669"/>
    <property type="project" value="UniProtKB-KW"/>
</dbReference>
<dbReference type="GO" id="GO:0006783">
    <property type="term" value="P:heme biosynthetic process"/>
    <property type="evidence" value="ECO:0007669"/>
    <property type="project" value="UniProtKB-UniRule"/>
</dbReference>
<dbReference type="CDD" id="cd00419">
    <property type="entry name" value="Ferrochelatase_C"/>
    <property type="match status" value="1"/>
</dbReference>
<dbReference type="CDD" id="cd03411">
    <property type="entry name" value="Ferrochelatase_N"/>
    <property type="match status" value="1"/>
</dbReference>
<dbReference type="FunFam" id="3.40.50.1400:FF:000002">
    <property type="entry name" value="Ferrochelatase"/>
    <property type="match status" value="1"/>
</dbReference>
<dbReference type="Gene3D" id="3.40.50.1400">
    <property type="match status" value="2"/>
</dbReference>
<dbReference type="HAMAP" id="MF_00323">
    <property type="entry name" value="Ferrochelatase"/>
    <property type="match status" value="1"/>
</dbReference>
<dbReference type="InterPro" id="IPR001015">
    <property type="entry name" value="Ferrochelatase"/>
</dbReference>
<dbReference type="InterPro" id="IPR019772">
    <property type="entry name" value="Ferrochelatase_AS"/>
</dbReference>
<dbReference type="InterPro" id="IPR033644">
    <property type="entry name" value="Ferrochelatase_C"/>
</dbReference>
<dbReference type="InterPro" id="IPR033659">
    <property type="entry name" value="Ferrochelatase_N"/>
</dbReference>
<dbReference type="NCBIfam" id="TIGR00109">
    <property type="entry name" value="hemH"/>
    <property type="match status" value="1"/>
</dbReference>
<dbReference type="PANTHER" id="PTHR11108">
    <property type="entry name" value="FERROCHELATASE"/>
    <property type="match status" value="1"/>
</dbReference>
<dbReference type="PANTHER" id="PTHR11108:SF1">
    <property type="entry name" value="FERROCHELATASE, MITOCHONDRIAL"/>
    <property type="match status" value="1"/>
</dbReference>
<dbReference type="Pfam" id="PF00762">
    <property type="entry name" value="Ferrochelatase"/>
    <property type="match status" value="1"/>
</dbReference>
<dbReference type="SUPFAM" id="SSF53800">
    <property type="entry name" value="Chelatase"/>
    <property type="match status" value="1"/>
</dbReference>
<dbReference type="PROSITE" id="PS00534">
    <property type="entry name" value="FERROCHELATASE"/>
    <property type="match status" value="1"/>
</dbReference>
<evidence type="ECO:0000255" key="1">
    <source>
        <dbReference type="HAMAP-Rule" id="MF_00323"/>
    </source>
</evidence>
<protein>
    <recommendedName>
        <fullName evidence="1">Ferrochelatase</fullName>
        <ecNumber evidence="1">4.98.1.1</ecNumber>
    </recommendedName>
    <alternativeName>
        <fullName evidence="1">Heme synthase</fullName>
    </alternativeName>
    <alternativeName>
        <fullName evidence="1">Protoheme ferro-lyase</fullName>
    </alternativeName>
</protein>
<comment type="function">
    <text evidence="1">Catalyzes the ferrous insertion into protoporphyrin IX.</text>
</comment>
<comment type="catalytic activity">
    <reaction evidence="1">
        <text>heme b + 2 H(+) = protoporphyrin IX + Fe(2+)</text>
        <dbReference type="Rhea" id="RHEA:22584"/>
        <dbReference type="ChEBI" id="CHEBI:15378"/>
        <dbReference type="ChEBI" id="CHEBI:29033"/>
        <dbReference type="ChEBI" id="CHEBI:57306"/>
        <dbReference type="ChEBI" id="CHEBI:60344"/>
        <dbReference type="EC" id="4.98.1.1"/>
    </reaction>
</comment>
<comment type="pathway">
    <text evidence="1">Porphyrin-containing compound metabolism; protoheme biosynthesis; protoheme from protoporphyrin-IX: step 1/1.</text>
</comment>
<comment type="subcellular location">
    <subcellularLocation>
        <location evidence="1">Cytoplasm</location>
    </subcellularLocation>
</comment>
<comment type="similarity">
    <text evidence="1">Belongs to the ferrochelatase family.</text>
</comment>
<accession>Q1BYX9</accession>
<name>HEMH_BURO1</name>
<reference key="1">
    <citation type="submission" date="2006-05" db="EMBL/GenBank/DDBJ databases">
        <title>Complete sequence of chromosome 1 of Burkholderia cenocepacia AU 1054.</title>
        <authorList>
            <consortium name="US DOE Joint Genome Institute"/>
            <person name="Copeland A."/>
            <person name="Lucas S."/>
            <person name="Lapidus A."/>
            <person name="Barry K."/>
            <person name="Detter J.C."/>
            <person name="Glavina del Rio T."/>
            <person name="Hammon N."/>
            <person name="Israni S."/>
            <person name="Dalin E."/>
            <person name="Tice H."/>
            <person name="Pitluck S."/>
            <person name="Chain P."/>
            <person name="Malfatti S."/>
            <person name="Shin M."/>
            <person name="Vergez L."/>
            <person name="Schmutz J."/>
            <person name="Larimer F."/>
            <person name="Land M."/>
            <person name="Hauser L."/>
            <person name="Kyrpides N."/>
            <person name="Lykidis A."/>
            <person name="LiPuma J.J."/>
            <person name="Konstantinidis K."/>
            <person name="Tiedje J.M."/>
            <person name="Richardson P."/>
        </authorList>
    </citation>
    <scope>NUCLEOTIDE SEQUENCE [LARGE SCALE GENOMIC DNA]</scope>
    <source>
        <strain>AU 1054</strain>
    </source>
</reference>
<sequence>MRFDLEPPSSVAAAHRIGVLLINLGTPDAPTPRAVRRYLAEFLSDPRVVEIPQAVWQVLLRTLILPLRGRASAKKYAAVWMPEGSPLRVYTERQTDSVRHLLTSNGYHVMVDYAMRYGSPNISHALTQFKRAGVERVLLMPMYPQYSASTTATAFDAAFDALARMRNQPEVRTVRHYADHPAYIHALAEQVRQYWAQHGRPDFAAGDKLVLSFHGVPKRTLDLGDPYHDQCQQTGALLMAALGLSTTECHVTFQSRFGKAEWLQPYTAPTLREFGEAGVRRADVFCPGFTADCLETIEEIGMEVRDEFLAGGGKTFHRIPCLNGASAWIGALSEIVAENLQGWPVKAAQPEPVN</sequence>
<proteinExistence type="inferred from homology"/>
<feature type="chain" id="PRO_1000019276" description="Ferrochelatase">
    <location>
        <begin position="1"/>
        <end position="354"/>
    </location>
</feature>
<feature type="binding site" evidence="1">
    <location>
        <position position="214"/>
    </location>
    <ligand>
        <name>Fe cation</name>
        <dbReference type="ChEBI" id="CHEBI:24875"/>
    </ligand>
</feature>
<feature type="binding site" evidence="1">
    <location>
        <position position="295"/>
    </location>
    <ligand>
        <name>Fe cation</name>
        <dbReference type="ChEBI" id="CHEBI:24875"/>
    </ligand>
</feature>